<name>KUP2_LACLS</name>
<accession>Q031B1</accession>
<keyword id="KW-1003">Cell membrane</keyword>
<keyword id="KW-0406">Ion transport</keyword>
<keyword id="KW-0472">Membrane</keyword>
<keyword id="KW-0630">Potassium</keyword>
<keyword id="KW-0633">Potassium transport</keyword>
<keyword id="KW-0769">Symport</keyword>
<keyword id="KW-0812">Transmembrane</keyword>
<keyword id="KW-1133">Transmembrane helix</keyword>
<keyword id="KW-0813">Transport</keyword>
<reference key="1">
    <citation type="journal article" date="2006" name="Proc. Natl. Acad. Sci. U.S.A.">
        <title>Comparative genomics of the lactic acid bacteria.</title>
        <authorList>
            <person name="Makarova K.S."/>
            <person name="Slesarev A."/>
            <person name="Wolf Y.I."/>
            <person name="Sorokin A."/>
            <person name="Mirkin B."/>
            <person name="Koonin E.V."/>
            <person name="Pavlov A."/>
            <person name="Pavlova N."/>
            <person name="Karamychev V."/>
            <person name="Polouchine N."/>
            <person name="Shakhova V."/>
            <person name="Grigoriev I."/>
            <person name="Lou Y."/>
            <person name="Rohksar D."/>
            <person name="Lucas S."/>
            <person name="Huang K."/>
            <person name="Goodstein D.M."/>
            <person name="Hawkins T."/>
            <person name="Plengvidhya V."/>
            <person name="Welker D."/>
            <person name="Hughes J."/>
            <person name="Goh Y."/>
            <person name="Benson A."/>
            <person name="Baldwin K."/>
            <person name="Lee J.-H."/>
            <person name="Diaz-Muniz I."/>
            <person name="Dosti B."/>
            <person name="Smeianov V."/>
            <person name="Wechter W."/>
            <person name="Barabote R."/>
            <person name="Lorca G."/>
            <person name="Altermann E."/>
            <person name="Barrangou R."/>
            <person name="Ganesan B."/>
            <person name="Xie Y."/>
            <person name="Rawsthorne H."/>
            <person name="Tamir D."/>
            <person name="Parker C."/>
            <person name="Breidt F."/>
            <person name="Broadbent J.R."/>
            <person name="Hutkins R."/>
            <person name="O'Sullivan D."/>
            <person name="Steele J."/>
            <person name="Unlu G."/>
            <person name="Saier M.H. Jr."/>
            <person name="Klaenhammer T."/>
            <person name="Richardson P."/>
            <person name="Kozyavkin S."/>
            <person name="Weimer B.C."/>
            <person name="Mills D.A."/>
        </authorList>
    </citation>
    <scope>NUCLEOTIDE SEQUENCE [LARGE SCALE GENOMIC DNA]</scope>
    <source>
        <strain>SK11</strain>
    </source>
</reference>
<gene>
    <name evidence="1" type="primary">kup2</name>
    <name type="ordered locus">LACR_0644</name>
</gene>
<feature type="chain" id="PRO_0000279797" description="Probable potassium transport system protein Kup 2">
    <location>
        <begin position="1"/>
        <end position="671"/>
    </location>
</feature>
<feature type="transmembrane region" description="Helical" evidence="1">
    <location>
        <begin position="18"/>
        <end position="38"/>
    </location>
</feature>
<feature type="transmembrane region" description="Helical" evidence="1">
    <location>
        <begin position="60"/>
        <end position="80"/>
    </location>
</feature>
<feature type="transmembrane region" description="Helical" evidence="1">
    <location>
        <begin position="103"/>
        <end position="123"/>
    </location>
</feature>
<feature type="transmembrane region" description="Helical" evidence="1">
    <location>
        <begin position="149"/>
        <end position="169"/>
    </location>
</feature>
<feature type="transmembrane region" description="Helical" evidence="1">
    <location>
        <begin position="173"/>
        <end position="193"/>
    </location>
</feature>
<feature type="transmembrane region" description="Helical" evidence="1">
    <location>
        <begin position="218"/>
        <end position="238"/>
    </location>
</feature>
<feature type="transmembrane region" description="Helical" evidence="1">
    <location>
        <begin position="252"/>
        <end position="272"/>
    </location>
</feature>
<feature type="transmembrane region" description="Helical" evidence="1">
    <location>
        <begin position="292"/>
        <end position="312"/>
    </location>
</feature>
<feature type="transmembrane region" description="Helical" evidence="1">
    <location>
        <begin position="343"/>
        <end position="363"/>
    </location>
</feature>
<feature type="transmembrane region" description="Helical" evidence="1">
    <location>
        <begin position="373"/>
        <end position="393"/>
    </location>
</feature>
<feature type="transmembrane region" description="Helical" evidence="1">
    <location>
        <begin position="402"/>
        <end position="422"/>
    </location>
</feature>
<feature type="transmembrane region" description="Helical" evidence="1">
    <location>
        <begin position="424"/>
        <end position="444"/>
    </location>
</feature>
<protein>
    <recommendedName>
        <fullName evidence="1">Probable potassium transport system protein Kup 2</fullName>
    </recommendedName>
</protein>
<organism>
    <name type="scientific">Lactococcus lactis subsp. cremoris (strain SK11)</name>
    <dbReference type="NCBI Taxonomy" id="272622"/>
    <lineage>
        <taxon>Bacteria</taxon>
        <taxon>Bacillati</taxon>
        <taxon>Bacillota</taxon>
        <taxon>Bacilli</taxon>
        <taxon>Lactobacillales</taxon>
        <taxon>Streptococcaceae</taxon>
        <taxon>Lactococcus</taxon>
        <taxon>Lactococcus cremoris subsp. cremoris</taxon>
    </lineage>
</organism>
<comment type="function">
    <text evidence="1">Transport of potassium into the cell. Likely operates as a K(+):H(+) symporter.</text>
</comment>
<comment type="catalytic activity">
    <reaction evidence="1">
        <text>K(+)(in) + H(+)(in) = K(+)(out) + H(+)(out)</text>
        <dbReference type="Rhea" id="RHEA:28490"/>
        <dbReference type="ChEBI" id="CHEBI:15378"/>
        <dbReference type="ChEBI" id="CHEBI:29103"/>
    </reaction>
    <physiologicalReaction direction="right-to-left" evidence="1">
        <dbReference type="Rhea" id="RHEA:28492"/>
    </physiologicalReaction>
</comment>
<comment type="subcellular location">
    <subcellularLocation>
        <location evidence="1">Cell membrane</location>
        <topology evidence="1">Multi-pass membrane protein</topology>
    </subcellularLocation>
</comment>
<comment type="similarity">
    <text evidence="1">Belongs to the HAK/KUP transporter (TC 2.A.72) family.</text>
</comment>
<dbReference type="EMBL" id="CP000425">
    <property type="protein sequence ID" value="ABJ72211.1"/>
    <property type="molecule type" value="Genomic_DNA"/>
</dbReference>
<dbReference type="RefSeq" id="WP_011675763.1">
    <property type="nucleotide sequence ID" value="NC_008527.1"/>
</dbReference>
<dbReference type="KEGG" id="llc:LACR_0644"/>
<dbReference type="HOGENOM" id="CLU_008142_4_1_9"/>
<dbReference type="Proteomes" id="UP000000240">
    <property type="component" value="Chromosome"/>
</dbReference>
<dbReference type="GO" id="GO:0005886">
    <property type="term" value="C:plasma membrane"/>
    <property type="evidence" value="ECO:0007669"/>
    <property type="project" value="UniProtKB-SubCell"/>
</dbReference>
<dbReference type="GO" id="GO:0015079">
    <property type="term" value="F:potassium ion transmembrane transporter activity"/>
    <property type="evidence" value="ECO:0007669"/>
    <property type="project" value="UniProtKB-UniRule"/>
</dbReference>
<dbReference type="GO" id="GO:0015293">
    <property type="term" value="F:symporter activity"/>
    <property type="evidence" value="ECO:0007669"/>
    <property type="project" value="UniProtKB-UniRule"/>
</dbReference>
<dbReference type="HAMAP" id="MF_01522">
    <property type="entry name" value="Kup"/>
    <property type="match status" value="1"/>
</dbReference>
<dbReference type="InterPro" id="IPR003855">
    <property type="entry name" value="K+_transporter"/>
</dbReference>
<dbReference type="InterPro" id="IPR053952">
    <property type="entry name" value="K_trans_C"/>
</dbReference>
<dbReference type="InterPro" id="IPR053951">
    <property type="entry name" value="K_trans_N"/>
</dbReference>
<dbReference type="InterPro" id="IPR023051">
    <property type="entry name" value="Kup"/>
</dbReference>
<dbReference type="PANTHER" id="PTHR30540:SF83">
    <property type="entry name" value="K+ POTASSIUM TRANSPORTER"/>
    <property type="match status" value="1"/>
</dbReference>
<dbReference type="PANTHER" id="PTHR30540">
    <property type="entry name" value="OSMOTIC STRESS POTASSIUM TRANSPORTER"/>
    <property type="match status" value="1"/>
</dbReference>
<dbReference type="Pfam" id="PF02705">
    <property type="entry name" value="K_trans"/>
    <property type="match status" value="1"/>
</dbReference>
<dbReference type="Pfam" id="PF22776">
    <property type="entry name" value="K_trans_C"/>
    <property type="match status" value="1"/>
</dbReference>
<sequence>MGQVHLHNRSFNKATSAGFLIALGIVYGDIGTSPLYAMQAIVRGQGGLANLSESFILGAVSLVIWTLTLITTVKYVLIALKADNHHEGGIFSLFTLVRRMRKWLIVPAMIGGATLLADGALTPAVTVTSAIEGLRGVTHVYSNQTTVMVTTLIILAFLFLIQRFGASLVGRLFGPIMFIWFGFLGVSGLINSFLDLSILKAINPYYAIHLLFSPENKAGFFILGSIFLVTTGAEALYSDLGHVGRGNIYVSWPFVKICIILSYCGQGAWLLAHRGEHIEKLNPFFAVLPDNMVIYVVILSTLAAIIASQALISGSFTLVSEAIRLKLLPLFKIYYPGQTLGQLYIPAVNFALWVTTSFFVLYFKTSEHMEAAYSLAITITMLMTTTLLTYFLIQKGMPKIAIAFISIGLFCIEGSFFAASLVQFINGAYIVVLIALAIIFVMFIWNKSHKIVMKYIKSLNINEYKNQLNALRHDESYDLYQTNVVYLTSKMDHEWIDRSILYSILDKRPKRAECYWFVNVKVTDEPYTSEYKVDMMDTDFIVRVNLYLGFRMRQEVPRYLRTIVTDLMESGRLPRQHQHYSITPGRKVGDFRFVVVEEKLMNARQMPGFERFVLQTKAQIKRITASPIRWFGLQFSEVTVETVPLVLSDVRNLEIHERLEQVDETEAPATN</sequence>
<evidence type="ECO:0000255" key="1">
    <source>
        <dbReference type="HAMAP-Rule" id="MF_01522"/>
    </source>
</evidence>
<proteinExistence type="inferred from homology"/>